<dbReference type="EC" id="6.1.1.14" evidence="1"/>
<dbReference type="EMBL" id="AE016827">
    <property type="protein sequence ID" value="AAU38563.1"/>
    <property type="molecule type" value="Genomic_DNA"/>
</dbReference>
<dbReference type="RefSeq" id="WP_011201114.1">
    <property type="nucleotide sequence ID" value="NC_006300.1"/>
</dbReference>
<dbReference type="SMR" id="Q65R47"/>
<dbReference type="STRING" id="221988.MS1956"/>
<dbReference type="KEGG" id="msu:MS1956"/>
<dbReference type="eggNOG" id="COG0751">
    <property type="taxonomic scope" value="Bacteria"/>
</dbReference>
<dbReference type="HOGENOM" id="CLU_007220_2_2_6"/>
<dbReference type="OrthoDB" id="9775440at2"/>
<dbReference type="Proteomes" id="UP000000607">
    <property type="component" value="Chromosome"/>
</dbReference>
<dbReference type="GO" id="GO:0005829">
    <property type="term" value="C:cytosol"/>
    <property type="evidence" value="ECO:0007669"/>
    <property type="project" value="TreeGrafter"/>
</dbReference>
<dbReference type="GO" id="GO:0004814">
    <property type="term" value="F:arginine-tRNA ligase activity"/>
    <property type="evidence" value="ECO:0007669"/>
    <property type="project" value="InterPro"/>
</dbReference>
<dbReference type="GO" id="GO:0005524">
    <property type="term" value="F:ATP binding"/>
    <property type="evidence" value="ECO:0007669"/>
    <property type="project" value="UniProtKB-UniRule"/>
</dbReference>
<dbReference type="GO" id="GO:0004820">
    <property type="term" value="F:glycine-tRNA ligase activity"/>
    <property type="evidence" value="ECO:0007669"/>
    <property type="project" value="UniProtKB-UniRule"/>
</dbReference>
<dbReference type="GO" id="GO:0006420">
    <property type="term" value="P:arginyl-tRNA aminoacylation"/>
    <property type="evidence" value="ECO:0007669"/>
    <property type="project" value="InterPro"/>
</dbReference>
<dbReference type="GO" id="GO:0006426">
    <property type="term" value="P:glycyl-tRNA aminoacylation"/>
    <property type="evidence" value="ECO:0007669"/>
    <property type="project" value="UniProtKB-UniRule"/>
</dbReference>
<dbReference type="HAMAP" id="MF_00255">
    <property type="entry name" value="Gly_tRNA_synth_beta"/>
    <property type="match status" value="1"/>
</dbReference>
<dbReference type="InterPro" id="IPR008909">
    <property type="entry name" value="DALR_anticod-bd"/>
</dbReference>
<dbReference type="InterPro" id="IPR015944">
    <property type="entry name" value="Gly-tRNA-synth_bsu"/>
</dbReference>
<dbReference type="InterPro" id="IPR006194">
    <property type="entry name" value="Gly-tRNA-synth_heterodimer"/>
</dbReference>
<dbReference type="NCBIfam" id="TIGR00211">
    <property type="entry name" value="glyS"/>
    <property type="match status" value="1"/>
</dbReference>
<dbReference type="PANTHER" id="PTHR30075:SF2">
    <property type="entry name" value="GLYCINE--TRNA LIGASE, CHLOROPLASTIC_MITOCHONDRIAL 2"/>
    <property type="match status" value="1"/>
</dbReference>
<dbReference type="PANTHER" id="PTHR30075">
    <property type="entry name" value="GLYCYL-TRNA SYNTHETASE"/>
    <property type="match status" value="1"/>
</dbReference>
<dbReference type="Pfam" id="PF05746">
    <property type="entry name" value="DALR_1"/>
    <property type="match status" value="1"/>
</dbReference>
<dbReference type="Pfam" id="PF02092">
    <property type="entry name" value="tRNA_synt_2f"/>
    <property type="match status" value="1"/>
</dbReference>
<dbReference type="PRINTS" id="PR01045">
    <property type="entry name" value="TRNASYNTHGB"/>
</dbReference>
<dbReference type="SUPFAM" id="SSF109604">
    <property type="entry name" value="HD-domain/PDEase-like"/>
    <property type="match status" value="1"/>
</dbReference>
<dbReference type="PROSITE" id="PS50861">
    <property type="entry name" value="AA_TRNA_LIGASE_II_GLYAB"/>
    <property type="match status" value="1"/>
</dbReference>
<organism>
    <name type="scientific">Mannheimia succiniciproducens (strain KCTC 0769BP / MBEL55E)</name>
    <dbReference type="NCBI Taxonomy" id="221988"/>
    <lineage>
        <taxon>Bacteria</taxon>
        <taxon>Pseudomonadati</taxon>
        <taxon>Pseudomonadota</taxon>
        <taxon>Gammaproteobacteria</taxon>
        <taxon>Pasteurellales</taxon>
        <taxon>Pasteurellaceae</taxon>
        <taxon>Basfia</taxon>
    </lineage>
</organism>
<sequence length="689" mass="76139">MTTQNFLAEIGTEELPPKALKKLATAFAENVENELNQAGLTFEKVQWFAAPRRLAVKVLNLATSQPTKEIEKRGPAVSAAFDAEGKPTKAAEGWARGCGITVEQAERLATDKGEWLVHRATIEGQPTKNLMLDIVTRSLANLPIPKMMRWGDKTEQFVRPVHTVSLLLGGELIEGEILGIASGRTIRGHRFLGEAEFQIAHADEYPQILKDKGSVIADFNERRAIILADSQAKASALGGVADIEDDLLDEVTSLVEFPNVLTATFEERFLAVPAEALVYTMKGDQKYFPIYDKNGKLLPHFIFVSNINPTDPTPIIEGNEKVVRPRLSDAEFFFNTDKKQRLEDLLPRLETVLFQQQLGTLLDKTKRIQALAGEIATQIGADKAKAERAGLLSKCDLMTNMVFEFTDTQGVMGMHYARHDGEDEEVAVALNEQYMPRFAGDNLPNSLVASSVALADKFDTLTGIFGIGQAPKGSADPFALRRAALGALRIIVEKNLPLDLAEIVKKSTALFADRLTNQNVVDDVVDFMLGRFRAWYQDEGIAVDVIQAVLARRPTKPADFDARVRAVSHFRTLDSAEALAAANKRVSNILAKIEGEISSKIDRTLLLEPEEKALAEQVLALQSELAPLFAKGEYQPALDRLAGLREVIDNFFDKVMVNAEDEKLRQNRQAILNTLRNLFLQVADISLLQ</sequence>
<protein>
    <recommendedName>
        <fullName evidence="1">Glycine--tRNA ligase beta subunit</fullName>
        <ecNumber evidence="1">6.1.1.14</ecNumber>
    </recommendedName>
    <alternativeName>
        <fullName evidence="1">Glycyl-tRNA synthetase beta subunit</fullName>
        <shortName evidence="1">GlyRS</shortName>
    </alternativeName>
</protein>
<name>SYGB_MANSM</name>
<feature type="chain" id="PRO_1000006378" description="Glycine--tRNA ligase beta subunit">
    <location>
        <begin position="1"/>
        <end position="689"/>
    </location>
</feature>
<gene>
    <name evidence="1" type="primary">glyS</name>
    <name type="ordered locus">MS1956</name>
</gene>
<keyword id="KW-0030">Aminoacyl-tRNA synthetase</keyword>
<keyword id="KW-0067">ATP-binding</keyword>
<keyword id="KW-0963">Cytoplasm</keyword>
<keyword id="KW-0436">Ligase</keyword>
<keyword id="KW-0547">Nucleotide-binding</keyword>
<keyword id="KW-0648">Protein biosynthesis</keyword>
<evidence type="ECO:0000255" key="1">
    <source>
        <dbReference type="HAMAP-Rule" id="MF_00255"/>
    </source>
</evidence>
<accession>Q65R47</accession>
<reference key="1">
    <citation type="journal article" date="2004" name="Nat. Biotechnol.">
        <title>The genome sequence of the capnophilic rumen bacterium Mannheimia succiniciproducens.</title>
        <authorList>
            <person name="Hong S.H."/>
            <person name="Kim J.S."/>
            <person name="Lee S.Y."/>
            <person name="In Y.H."/>
            <person name="Choi S.S."/>
            <person name="Rih J.-K."/>
            <person name="Kim C.H."/>
            <person name="Jeong H."/>
            <person name="Hur C.G."/>
            <person name="Kim J.J."/>
        </authorList>
    </citation>
    <scope>NUCLEOTIDE SEQUENCE [LARGE SCALE GENOMIC DNA]</scope>
    <source>
        <strain>KCTC 0769BP / MBEL55E</strain>
    </source>
</reference>
<comment type="catalytic activity">
    <reaction evidence="1">
        <text>tRNA(Gly) + glycine + ATP = glycyl-tRNA(Gly) + AMP + diphosphate</text>
        <dbReference type="Rhea" id="RHEA:16013"/>
        <dbReference type="Rhea" id="RHEA-COMP:9664"/>
        <dbReference type="Rhea" id="RHEA-COMP:9683"/>
        <dbReference type="ChEBI" id="CHEBI:30616"/>
        <dbReference type="ChEBI" id="CHEBI:33019"/>
        <dbReference type="ChEBI" id="CHEBI:57305"/>
        <dbReference type="ChEBI" id="CHEBI:78442"/>
        <dbReference type="ChEBI" id="CHEBI:78522"/>
        <dbReference type="ChEBI" id="CHEBI:456215"/>
        <dbReference type="EC" id="6.1.1.14"/>
    </reaction>
</comment>
<comment type="subunit">
    <text evidence="1">Tetramer of two alpha and two beta subunits.</text>
</comment>
<comment type="subcellular location">
    <subcellularLocation>
        <location evidence="1">Cytoplasm</location>
    </subcellularLocation>
</comment>
<comment type="similarity">
    <text evidence="1">Belongs to the class-II aminoacyl-tRNA synthetase family.</text>
</comment>
<proteinExistence type="inferred from homology"/>